<organism>
    <name type="scientific">Escherichia coli (strain SE11)</name>
    <dbReference type="NCBI Taxonomy" id="409438"/>
    <lineage>
        <taxon>Bacteria</taxon>
        <taxon>Pseudomonadati</taxon>
        <taxon>Pseudomonadota</taxon>
        <taxon>Gammaproteobacteria</taxon>
        <taxon>Enterobacterales</taxon>
        <taxon>Enterobacteriaceae</taxon>
        <taxon>Escherichia</taxon>
    </lineage>
</organism>
<proteinExistence type="inferred from homology"/>
<comment type="catalytic activity">
    <reaction evidence="1">
        <text>5-amino-1-(5-phospho-D-ribosyl)imidazole-4-carboxylate + L-aspartate + ATP = (2S)-2-[5-amino-1-(5-phospho-beta-D-ribosyl)imidazole-4-carboxamido]succinate + ADP + phosphate + 2 H(+)</text>
        <dbReference type="Rhea" id="RHEA:22628"/>
        <dbReference type="ChEBI" id="CHEBI:15378"/>
        <dbReference type="ChEBI" id="CHEBI:29991"/>
        <dbReference type="ChEBI" id="CHEBI:30616"/>
        <dbReference type="ChEBI" id="CHEBI:43474"/>
        <dbReference type="ChEBI" id="CHEBI:58443"/>
        <dbReference type="ChEBI" id="CHEBI:77657"/>
        <dbReference type="ChEBI" id="CHEBI:456216"/>
        <dbReference type="EC" id="6.3.2.6"/>
    </reaction>
</comment>
<comment type="pathway">
    <text evidence="1">Purine metabolism; IMP biosynthesis via de novo pathway; 5-amino-1-(5-phospho-D-ribosyl)imidazole-4-carboxamide from 5-amino-1-(5-phospho-D-ribosyl)imidazole-4-carboxylate: step 1/2.</text>
</comment>
<comment type="similarity">
    <text evidence="1">Belongs to the SAICAR synthetase family.</text>
</comment>
<protein>
    <recommendedName>
        <fullName evidence="1">Phosphoribosylaminoimidazole-succinocarboxamide synthase</fullName>
        <ecNumber evidence="1">6.3.2.6</ecNumber>
    </recommendedName>
    <alternativeName>
        <fullName evidence="1">SAICAR synthetase</fullName>
    </alternativeName>
</protein>
<dbReference type="EC" id="6.3.2.6" evidence="1"/>
<dbReference type="EMBL" id="AP009240">
    <property type="protein sequence ID" value="BAG78284.1"/>
    <property type="molecule type" value="Genomic_DNA"/>
</dbReference>
<dbReference type="RefSeq" id="WP_001295467.1">
    <property type="nucleotide sequence ID" value="NC_011415.1"/>
</dbReference>
<dbReference type="SMR" id="B6I546"/>
<dbReference type="GeneID" id="89517285"/>
<dbReference type="KEGG" id="ecy:ECSE_2760"/>
<dbReference type="HOGENOM" id="CLU_061495_2_1_6"/>
<dbReference type="UniPathway" id="UPA00074">
    <property type="reaction ID" value="UER00131"/>
</dbReference>
<dbReference type="Proteomes" id="UP000008199">
    <property type="component" value="Chromosome"/>
</dbReference>
<dbReference type="GO" id="GO:0005829">
    <property type="term" value="C:cytosol"/>
    <property type="evidence" value="ECO:0007669"/>
    <property type="project" value="TreeGrafter"/>
</dbReference>
<dbReference type="GO" id="GO:0005524">
    <property type="term" value="F:ATP binding"/>
    <property type="evidence" value="ECO:0007669"/>
    <property type="project" value="UniProtKB-KW"/>
</dbReference>
<dbReference type="GO" id="GO:0004639">
    <property type="term" value="F:phosphoribosylaminoimidazolesuccinocarboxamide synthase activity"/>
    <property type="evidence" value="ECO:0007669"/>
    <property type="project" value="UniProtKB-UniRule"/>
</dbReference>
<dbReference type="GO" id="GO:0006189">
    <property type="term" value="P:'de novo' IMP biosynthetic process"/>
    <property type="evidence" value="ECO:0007669"/>
    <property type="project" value="UniProtKB-UniRule"/>
</dbReference>
<dbReference type="GO" id="GO:0009236">
    <property type="term" value="P:cobalamin biosynthetic process"/>
    <property type="evidence" value="ECO:0007669"/>
    <property type="project" value="InterPro"/>
</dbReference>
<dbReference type="CDD" id="cd01415">
    <property type="entry name" value="SAICAR_synt_PurC"/>
    <property type="match status" value="1"/>
</dbReference>
<dbReference type="FunFam" id="3.30.200.20:FF:000086">
    <property type="entry name" value="Phosphoribosylaminoimidazole-succinocarboxamide synthase"/>
    <property type="match status" value="1"/>
</dbReference>
<dbReference type="FunFam" id="3.30.470.20:FF:000006">
    <property type="entry name" value="Phosphoribosylaminoimidazole-succinocarboxamide synthase"/>
    <property type="match status" value="1"/>
</dbReference>
<dbReference type="Gene3D" id="3.30.470.20">
    <property type="entry name" value="ATP-grasp fold, B domain"/>
    <property type="match status" value="1"/>
</dbReference>
<dbReference type="Gene3D" id="3.30.200.20">
    <property type="entry name" value="Phosphorylase Kinase, domain 1"/>
    <property type="match status" value="1"/>
</dbReference>
<dbReference type="HAMAP" id="MF_00137">
    <property type="entry name" value="SAICAR_synth"/>
    <property type="match status" value="1"/>
</dbReference>
<dbReference type="InterPro" id="IPR028923">
    <property type="entry name" value="SAICAR_synt/ADE2_N"/>
</dbReference>
<dbReference type="InterPro" id="IPR033934">
    <property type="entry name" value="SAICAR_synt_PurC"/>
</dbReference>
<dbReference type="InterPro" id="IPR001636">
    <property type="entry name" value="SAICAR_synth"/>
</dbReference>
<dbReference type="InterPro" id="IPR050089">
    <property type="entry name" value="SAICAR_synthetase"/>
</dbReference>
<dbReference type="InterPro" id="IPR018236">
    <property type="entry name" value="SAICAR_synthetase_CS"/>
</dbReference>
<dbReference type="NCBIfam" id="TIGR00081">
    <property type="entry name" value="purC"/>
    <property type="match status" value="1"/>
</dbReference>
<dbReference type="PANTHER" id="PTHR43599">
    <property type="entry name" value="MULTIFUNCTIONAL PROTEIN ADE2"/>
    <property type="match status" value="1"/>
</dbReference>
<dbReference type="PANTHER" id="PTHR43599:SF3">
    <property type="entry name" value="SI:DKEY-6E2.2"/>
    <property type="match status" value="1"/>
</dbReference>
<dbReference type="Pfam" id="PF01259">
    <property type="entry name" value="SAICAR_synt"/>
    <property type="match status" value="1"/>
</dbReference>
<dbReference type="SUPFAM" id="SSF56104">
    <property type="entry name" value="SAICAR synthase-like"/>
    <property type="match status" value="1"/>
</dbReference>
<dbReference type="PROSITE" id="PS01057">
    <property type="entry name" value="SAICAR_SYNTHETASE_1"/>
    <property type="match status" value="1"/>
</dbReference>
<dbReference type="PROSITE" id="PS01058">
    <property type="entry name" value="SAICAR_SYNTHETASE_2"/>
    <property type="match status" value="1"/>
</dbReference>
<keyword id="KW-0067">ATP-binding</keyword>
<keyword id="KW-0436">Ligase</keyword>
<keyword id="KW-0547">Nucleotide-binding</keyword>
<keyword id="KW-0658">Purine biosynthesis</keyword>
<evidence type="ECO:0000255" key="1">
    <source>
        <dbReference type="HAMAP-Rule" id="MF_00137"/>
    </source>
</evidence>
<sequence length="237" mass="26995">MQKQAELYRGKAKTVYSTENPDLLVLEFRNDTSAGDGARIEQFDRKGMVNNKFNYFIMSKLAEAGIPTQMERLLSDTECLVKKLDMVPVECVVRNRAAGSLVKRLGIEEGIELNPPLFDLFLKNDAMHDPMVNESYCETFGWVSKENLARMKELTYKANDVLKKLFDDAGLILVDFKLEFGLYKGEVVLGDEFSPDGSRLWDKETLEKMDKDRFRQSLGGLIEAYEAVARRLGVQLD</sequence>
<accession>B6I546</accession>
<name>PUR7_ECOSE</name>
<reference key="1">
    <citation type="journal article" date="2008" name="DNA Res.">
        <title>Complete genome sequence and comparative analysis of the wild-type commensal Escherichia coli strain SE11 isolated from a healthy adult.</title>
        <authorList>
            <person name="Oshima K."/>
            <person name="Toh H."/>
            <person name="Ogura Y."/>
            <person name="Sasamoto H."/>
            <person name="Morita H."/>
            <person name="Park S.-H."/>
            <person name="Ooka T."/>
            <person name="Iyoda S."/>
            <person name="Taylor T.D."/>
            <person name="Hayashi T."/>
            <person name="Itoh K."/>
            <person name="Hattori M."/>
        </authorList>
    </citation>
    <scope>NUCLEOTIDE SEQUENCE [LARGE SCALE GENOMIC DNA]</scope>
    <source>
        <strain>SE11</strain>
    </source>
</reference>
<feature type="chain" id="PRO_1000095983" description="Phosphoribosylaminoimidazole-succinocarboxamide synthase">
    <location>
        <begin position="1"/>
        <end position="237"/>
    </location>
</feature>
<gene>
    <name evidence="1" type="primary">purC</name>
    <name type="ordered locus">ECSE_2760</name>
</gene>